<comment type="function">
    <text evidence="7 8 9 10">Methylthiotransferase that catalyzes the conversion of N6-(dimethylallyl)adenosine (i(6)A) to 2-methylthio-N6-(dimethylallyl)adenosine (ms(2)i(6)A) at position 37 (adjacent to the 3'-end of the anticodon) of four mitochondrial DNA-encoded tRNAs (Ser(UCN), Phe, Tyr and Trp) (PubMed:22422838, PubMed:25738458, PubMed:28981754). Essential for efficient and highly accurate protein translation by the ribosome (PubMed:22422838, PubMed:25738458, PubMed:28981754). Specifically inhibits CDK5 activation by CDK5R1 (PubMed:11882646). Essential for efficient mitochondrial protein synthesis and respiratory chain; shows pathological consequences in mitochondrial disease (PubMed:25738458).</text>
</comment>
<comment type="catalytic activity">
    <reaction evidence="18 19">
        <text>N(6)-dimethylallyladenosine(37) in tRNA + (sulfur carrier)-SH + AH2 + 2 S-adenosyl-L-methionine = 2-methylsulfanyl-N(6)-dimethylallyladenosine(37) in tRNA + (sulfur carrier)-H + 5'-deoxyadenosine + L-methionine + A + S-adenosyl-L-homocysteine + 2 H(+)</text>
        <dbReference type="Rhea" id="RHEA:37067"/>
        <dbReference type="Rhea" id="RHEA-COMP:10375"/>
        <dbReference type="Rhea" id="RHEA-COMP:10376"/>
        <dbReference type="Rhea" id="RHEA-COMP:14737"/>
        <dbReference type="Rhea" id="RHEA-COMP:14739"/>
        <dbReference type="ChEBI" id="CHEBI:13193"/>
        <dbReference type="ChEBI" id="CHEBI:15378"/>
        <dbReference type="ChEBI" id="CHEBI:17319"/>
        <dbReference type="ChEBI" id="CHEBI:17499"/>
        <dbReference type="ChEBI" id="CHEBI:29917"/>
        <dbReference type="ChEBI" id="CHEBI:57844"/>
        <dbReference type="ChEBI" id="CHEBI:57856"/>
        <dbReference type="ChEBI" id="CHEBI:59789"/>
        <dbReference type="ChEBI" id="CHEBI:64428"/>
        <dbReference type="ChEBI" id="CHEBI:74415"/>
        <dbReference type="ChEBI" id="CHEBI:74417"/>
        <dbReference type="EC" id="2.8.4.3"/>
    </reaction>
    <physiologicalReaction direction="left-to-right" evidence="9 18">
        <dbReference type="Rhea" id="RHEA:37068"/>
    </physiologicalReaction>
</comment>
<comment type="cofactor">
    <cofactor evidence="4">
        <name>[4Fe-4S] cluster</name>
        <dbReference type="ChEBI" id="CHEBI:49883"/>
    </cofactor>
    <text evidence="4">Binds 2 [4Fe-4S] clusters. One cluster is coordinated with 3 cysteines and an exchangeable S-adenosyl-L-methionine.</text>
</comment>
<comment type="subunit">
    <text evidence="7">Interacts with CDK5R1 (p35 form). CDK5RAP1, CDK5RAP2 and CDK5RAP3 show competitive binding to CDK5R1. Forms a complex with CDK5R1 and CDK5.</text>
</comment>
<comment type="subcellular location">
    <subcellularLocation>
        <location evidence="8">Mitochondrion</location>
    </subcellularLocation>
</comment>
<comment type="alternative products">
    <event type="alternative splicing"/>
    <isoform>
        <id>Q96SZ6-1</id>
        <name>1</name>
        <sequence type="displayed"/>
    </isoform>
    <isoform>
        <id>Q96SZ6-2</id>
        <name>2</name>
        <sequence type="described" ref="VSP_007560 VSP_007562"/>
    </isoform>
    <isoform>
        <id>Q96SZ6-3</id>
        <name>3</name>
        <name evidence="13">CDK5RAP1_v1</name>
        <name>isoform a</name>
        <sequence type="described" ref="VSP_007562"/>
    </isoform>
    <isoform>
        <id>Q96SZ6-4</id>
        <name>4</name>
        <name>isoform d</name>
        <sequence type="described" ref="VSP_007561"/>
    </isoform>
    <isoform>
        <id>Q96SZ6-5</id>
        <name>5</name>
        <name evidence="13">CDK5RAP1_v4</name>
        <sequence type="described" ref="VSP_047799 VSP_047800 VSP_047801"/>
    </isoform>
    <isoform>
        <id>Q96SZ6-6</id>
        <name>6</name>
        <name evidence="13">CDK5RAP1_v3</name>
        <sequence type="described" ref="VSP_047799 VSP_047802"/>
    </isoform>
</comment>
<comment type="tissue specificity">
    <text evidence="6 7">Expressed in heart, brain, placenta, lung, liver, skeletal muscle, kidney and pancreas (PubMed:10721722). Expressed in neurons of central nervous tissue (PubMed:10721722, PubMed:11882646).</text>
</comment>
<comment type="tissue specificity">
    <molecule>Isoform 5</molecule>
    <text>Mainly expressed in brain, placenta and testis.</text>
</comment>
<comment type="tissue specificity">
    <molecule>Isoform 6</molecule>
    <text>High expression in placenta and lung.</text>
</comment>
<comment type="miscellaneous">
    <molecule>Isoform 1</molecule>
    <text>May be due to intron retention.</text>
</comment>
<comment type="miscellaneous">
    <molecule>Isoform 2</molecule>
    <text evidence="16">Absence of the mitochondrial target sequence which may lead to miss-localization.</text>
</comment>
<comment type="similarity">
    <text evidence="17">Belongs to the methylthiotransferase family. MiaB subfamily.</text>
</comment>
<comment type="caution">
    <text evidence="8 10">CDK5RAP1 was proposed to act on both nuclear and mitochondrial RNA (PubMed:22422838). However, another study shows that ms2i6A is a mitochondrial tRNA specific modification and is absent from nuclear encoded RNA species, implying that there is no methylthiotransferase activity on nuclear RNA (PubMed:28981754).</text>
</comment>
<comment type="sequence caution" evidence="17">
    <conflict type="frameshift">
        <sequence resource="EMBL-CDS" id="AAD34147"/>
    </conflict>
</comment>
<comment type="sequence caution" evidence="17">
    <conflict type="frameshift">
        <sequence resource="EMBL-CDS" id="AAF29131"/>
    </conflict>
</comment>
<comment type="sequence caution" evidence="17">
    <conflict type="erroneous termination">
        <sequence resource="EMBL-CDS" id="BAB55120"/>
    </conflict>
    <text>Truncated C-terminus.</text>
</comment>
<proteinExistence type="evidence at protein level"/>
<reference key="1">
    <citation type="journal article" date="2000" name="Genome Res.">
        <title>Identification of novel human genes evolutionarily conserved in Caenorhabditis elegans by comparative proteomics.</title>
        <authorList>
            <person name="Lai C.-H."/>
            <person name="Chou C.-Y."/>
            <person name="Ch'ang L.-Y."/>
            <person name="Liu C.-S."/>
            <person name="Lin W.-C."/>
        </authorList>
    </citation>
    <scope>NUCLEOTIDE SEQUENCE [LARGE SCALE MRNA] (ISOFORM 1)</scope>
</reference>
<reference key="2">
    <citation type="journal article" date="2000" name="Genome Res.">
        <title>Cloning and functional analysis of cDNAs with open reading frames for 300 previously undefined genes expressed in CD34+ hematopoietic stem/progenitor cells.</title>
        <authorList>
            <person name="Zhang Q.-H."/>
            <person name="Ye M."/>
            <person name="Wu X.-Y."/>
            <person name="Ren S.-X."/>
            <person name="Zhao M."/>
            <person name="Zhao C.-J."/>
            <person name="Fu G."/>
            <person name="Shen Y."/>
            <person name="Fan H.-Y."/>
            <person name="Lu G."/>
            <person name="Zhong M."/>
            <person name="Xu X.-R."/>
            <person name="Han Z.-G."/>
            <person name="Zhang J.-W."/>
            <person name="Tao J."/>
            <person name="Huang Q.-H."/>
            <person name="Zhou J."/>
            <person name="Hu G.-X."/>
            <person name="Gu J."/>
            <person name="Chen S.-J."/>
            <person name="Chen Z."/>
        </authorList>
    </citation>
    <scope>NUCLEOTIDE SEQUENCE [LARGE SCALE MRNA] (ISOFORM 3)</scope>
    <source>
        <tissue>Umbilical cord blood</tissue>
    </source>
</reference>
<reference key="3">
    <citation type="journal article" date="2004" name="Genes Genet. Syst.">
        <title>Cloning, characterization and expression of CDK5RAP1_v3 and CDK5RAP1_v4, two novel splice variants of human CDK5RAP1.</title>
        <authorList>
            <person name="Zou X."/>
            <person name="Ji C."/>
            <person name="Jin F."/>
            <person name="Liu J."/>
            <person name="Wu M."/>
            <person name="Zheng H."/>
            <person name="Wang Y."/>
            <person name="Li X."/>
            <person name="Xu J."/>
            <person name="Gu S."/>
            <person name="Xie Y."/>
            <person name="Mao Y."/>
        </authorList>
    </citation>
    <scope>NUCLEOTIDE SEQUENCE [MRNA] (ISOFORMS 5 AND 6)</scope>
</reference>
<reference key="4">
    <citation type="journal article" date="2004" name="Nat. Genet.">
        <title>Complete sequencing and characterization of 21,243 full-length human cDNAs.</title>
        <authorList>
            <person name="Ota T."/>
            <person name="Suzuki Y."/>
            <person name="Nishikawa T."/>
            <person name="Otsuki T."/>
            <person name="Sugiyama T."/>
            <person name="Irie R."/>
            <person name="Wakamatsu A."/>
            <person name="Hayashi K."/>
            <person name="Sato H."/>
            <person name="Nagai K."/>
            <person name="Kimura K."/>
            <person name="Makita H."/>
            <person name="Sekine M."/>
            <person name="Obayashi M."/>
            <person name="Nishi T."/>
            <person name="Shibahara T."/>
            <person name="Tanaka T."/>
            <person name="Ishii S."/>
            <person name="Yamamoto J."/>
            <person name="Saito K."/>
            <person name="Kawai Y."/>
            <person name="Isono Y."/>
            <person name="Nakamura Y."/>
            <person name="Nagahari K."/>
            <person name="Murakami K."/>
            <person name="Yasuda T."/>
            <person name="Iwayanagi T."/>
            <person name="Wagatsuma M."/>
            <person name="Shiratori A."/>
            <person name="Sudo H."/>
            <person name="Hosoiri T."/>
            <person name="Kaku Y."/>
            <person name="Kodaira H."/>
            <person name="Kondo H."/>
            <person name="Sugawara M."/>
            <person name="Takahashi M."/>
            <person name="Kanda K."/>
            <person name="Yokoi T."/>
            <person name="Furuya T."/>
            <person name="Kikkawa E."/>
            <person name="Omura Y."/>
            <person name="Abe K."/>
            <person name="Kamihara K."/>
            <person name="Katsuta N."/>
            <person name="Sato K."/>
            <person name="Tanikawa M."/>
            <person name="Yamazaki M."/>
            <person name="Ninomiya K."/>
            <person name="Ishibashi T."/>
            <person name="Yamashita H."/>
            <person name="Murakawa K."/>
            <person name="Fujimori K."/>
            <person name="Tanai H."/>
            <person name="Kimata M."/>
            <person name="Watanabe M."/>
            <person name="Hiraoka S."/>
            <person name="Chiba Y."/>
            <person name="Ishida S."/>
            <person name="Ono Y."/>
            <person name="Takiguchi S."/>
            <person name="Watanabe S."/>
            <person name="Yosida M."/>
            <person name="Hotuta T."/>
            <person name="Kusano J."/>
            <person name="Kanehori K."/>
            <person name="Takahashi-Fujii A."/>
            <person name="Hara H."/>
            <person name="Tanase T.-O."/>
            <person name="Nomura Y."/>
            <person name="Togiya S."/>
            <person name="Komai F."/>
            <person name="Hara R."/>
            <person name="Takeuchi K."/>
            <person name="Arita M."/>
            <person name="Imose N."/>
            <person name="Musashino K."/>
            <person name="Yuuki H."/>
            <person name="Oshima A."/>
            <person name="Sasaki N."/>
            <person name="Aotsuka S."/>
            <person name="Yoshikawa Y."/>
            <person name="Matsunawa H."/>
            <person name="Ichihara T."/>
            <person name="Shiohata N."/>
            <person name="Sano S."/>
            <person name="Moriya S."/>
            <person name="Momiyama H."/>
            <person name="Satoh N."/>
            <person name="Takami S."/>
            <person name="Terashima Y."/>
            <person name="Suzuki O."/>
            <person name="Nakagawa S."/>
            <person name="Senoh A."/>
            <person name="Mizoguchi H."/>
            <person name="Goto Y."/>
            <person name="Shimizu F."/>
            <person name="Wakebe H."/>
            <person name="Hishigaki H."/>
            <person name="Watanabe T."/>
            <person name="Sugiyama A."/>
            <person name="Takemoto M."/>
            <person name="Kawakami B."/>
            <person name="Yamazaki M."/>
            <person name="Watanabe K."/>
            <person name="Kumagai A."/>
            <person name="Itakura S."/>
            <person name="Fukuzumi Y."/>
            <person name="Fujimori Y."/>
            <person name="Komiyama M."/>
            <person name="Tashiro H."/>
            <person name="Tanigami A."/>
            <person name="Fujiwara T."/>
            <person name="Ono T."/>
            <person name="Yamada K."/>
            <person name="Fujii Y."/>
            <person name="Ozaki K."/>
            <person name="Hirao M."/>
            <person name="Ohmori Y."/>
            <person name="Kawabata A."/>
            <person name="Hikiji T."/>
            <person name="Kobatake N."/>
            <person name="Inagaki H."/>
            <person name="Ikema Y."/>
            <person name="Okamoto S."/>
            <person name="Okitani R."/>
            <person name="Kawakami T."/>
            <person name="Noguchi S."/>
            <person name="Itoh T."/>
            <person name="Shigeta K."/>
            <person name="Senba T."/>
            <person name="Matsumura K."/>
            <person name="Nakajima Y."/>
            <person name="Mizuno T."/>
            <person name="Morinaga M."/>
            <person name="Sasaki M."/>
            <person name="Togashi T."/>
            <person name="Oyama M."/>
            <person name="Hata H."/>
            <person name="Watanabe M."/>
            <person name="Komatsu T."/>
            <person name="Mizushima-Sugano J."/>
            <person name="Satoh T."/>
            <person name="Shirai Y."/>
            <person name="Takahashi Y."/>
            <person name="Nakagawa K."/>
            <person name="Okumura K."/>
            <person name="Nagase T."/>
            <person name="Nomura N."/>
            <person name="Kikuchi H."/>
            <person name="Masuho Y."/>
            <person name="Yamashita R."/>
            <person name="Nakai K."/>
            <person name="Yada T."/>
            <person name="Nakamura Y."/>
            <person name="Ohara O."/>
            <person name="Isogai T."/>
            <person name="Sugano S."/>
        </authorList>
    </citation>
    <scope>NUCLEOTIDE SEQUENCE [LARGE SCALE MRNA] (ISOFORMS 2 AND 3)</scope>
    <source>
        <tissue>Retinoblastoma</tissue>
        <tissue>Stomach</tissue>
        <tissue>Teratocarcinoma</tissue>
    </source>
</reference>
<reference key="5">
    <citation type="journal article" date="2001" name="Nature">
        <title>The DNA sequence and comparative analysis of human chromosome 20.</title>
        <authorList>
            <person name="Deloukas P."/>
            <person name="Matthews L.H."/>
            <person name="Ashurst J.L."/>
            <person name="Burton J."/>
            <person name="Gilbert J.G.R."/>
            <person name="Jones M."/>
            <person name="Stavrides G."/>
            <person name="Almeida J.P."/>
            <person name="Babbage A.K."/>
            <person name="Bagguley C.L."/>
            <person name="Bailey J."/>
            <person name="Barlow K.F."/>
            <person name="Bates K.N."/>
            <person name="Beard L.M."/>
            <person name="Beare D.M."/>
            <person name="Beasley O.P."/>
            <person name="Bird C.P."/>
            <person name="Blakey S.E."/>
            <person name="Bridgeman A.M."/>
            <person name="Brown A.J."/>
            <person name="Buck D."/>
            <person name="Burrill W.D."/>
            <person name="Butler A.P."/>
            <person name="Carder C."/>
            <person name="Carter N.P."/>
            <person name="Chapman J.C."/>
            <person name="Clamp M."/>
            <person name="Clark G."/>
            <person name="Clark L.N."/>
            <person name="Clark S.Y."/>
            <person name="Clee C.M."/>
            <person name="Clegg S."/>
            <person name="Cobley V.E."/>
            <person name="Collier R.E."/>
            <person name="Connor R.E."/>
            <person name="Corby N.R."/>
            <person name="Coulson A."/>
            <person name="Coville G.J."/>
            <person name="Deadman R."/>
            <person name="Dhami P.D."/>
            <person name="Dunn M."/>
            <person name="Ellington A.G."/>
            <person name="Frankland J.A."/>
            <person name="Fraser A."/>
            <person name="French L."/>
            <person name="Garner P."/>
            <person name="Grafham D.V."/>
            <person name="Griffiths C."/>
            <person name="Griffiths M.N.D."/>
            <person name="Gwilliam R."/>
            <person name="Hall R.E."/>
            <person name="Hammond S."/>
            <person name="Harley J.L."/>
            <person name="Heath P.D."/>
            <person name="Ho S."/>
            <person name="Holden J.L."/>
            <person name="Howden P.J."/>
            <person name="Huckle E."/>
            <person name="Hunt A.R."/>
            <person name="Hunt S.E."/>
            <person name="Jekosch K."/>
            <person name="Johnson C.M."/>
            <person name="Johnson D."/>
            <person name="Kay M.P."/>
            <person name="Kimberley A.M."/>
            <person name="King A."/>
            <person name="Knights A."/>
            <person name="Laird G.K."/>
            <person name="Lawlor S."/>
            <person name="Lehvaeslaiho M.H."/>
            <person name="Leversha M.A."/>
            <person name="Lloyd C."/>
            <person name="Lloyd D.M."/>
            <person name="Lovell J.D."/>
            <person name="Marsh V.L."/>
            <person name="Martin S.L."/>
            <person name="McConnachie L.J."/>
            <person name="McLay K."/>
            <person name="McMurray A.A."/>
            <person name="Milne S.A."/>
            <person name="Mistry D."/>
            <person name="Moore M.J.F."/>
            <person name="Mullikin J.C."/>
            <person name="Nickerson T."/>
            <person name="Oliver K."/>
            <person name="Parker A."/>
            <person name="Patel R."/>
            <person name="Pearce T.A.V."/>
            <person name="Peck A.I."/>
            <person name="Phillimore B.J.C.T."/>
            <person name="Prathalingam S.R."/>
            <person name="Plumb R.W."/>
            <person name="Ramsay H."/>
            <person name="Rice C.M."/>
            <person name="Ross M.T."/>
            <person name="Scott C.E."/>
            <person name="Sehra H.K."/>
            <person name="Shownkeen R."/>
            <person name="Sims S."/>
            <person name="Skuce C.D."/>
            <person name="Smith M.L."/>
            <person name="Soderlund C."/>
            <person name="Steward C.A."/>
            <person name="Sulston J.E."/>
            <person name="Swann R.M."/>
            <person name="Sycamore N."/>
            <person name="Taylor R."/>
            <person name="Tee L."/>
            <person name="Thomas D.W."/>
            <person name="Thorpe A."/>
            <person name="Tracey A."/>
            <person name="Tromans A.C."/>
            <person name="Vaudin M."/>
            <person name="Wall M."/>
            <person name="Wallis J.M."/>
            <person name="Whitehead S.L."/>
            <person name="Whittaker P."/>
            <person name="Willey D.L."/>
            <person name="Williams L."/>
            <person name="Williams S.A."/>
            <person name="Wilming L."/>
            <person name="Wray P.W."/>
            <person name="Hubbard T."/>
            <person name="Durbin R.M."/>
            <person name="Bentley D.R."/>
            <person name="Beck S."/>
            <person name="Rogers J."/>
        </authorList>
    </citation>
    <scope>NUCLEOTIDE SEQUENCE [LARGE SCALE GENOMIC DNA]</scope>
</reference>
<reference key="6">
    <citation type="submission" date="2005-09" db="EMBL/GenBank/DDBJ databases">
        <authorList>
            <person name="Mural R.J."/>
            <person name="Istrail S."/>
            <person name="Sutton G.G."/>
            <person name="Florea L."/>
            <person name="Halpern A.L."/>
            <person name="Mobarry C.M."/>
            <person name="Lippert R."/>
            <person name="Walenz B."/>
            <person name="Shatkay H."/>
            <person name="Dew I."/>
            <person name="Miller J.R."/>
            <person name="Flanigan M.J."/>
            <person name="Edwards N.J."/>
            <person name="Bolanos R."/>
            <person name="Fasulo D."/>
            <person name="Halldorsson B.V."/>
            <person name="Hannenhalli S."/>
            <person name="Turner R."/>
            <person name="Yooseph S."/>
            <person name="Lu F."/>
            <person name="Nusskern D.R."/>
            <person name="Shue B.C."/>
            <person name="Zheng X.H."/>
            <person name="Zhong F."/>
            <person name="Delcher A.L."/>
            <person name="Huson D.H."/>
            <person name="Kravitz S.A."/>
            <person name="Mouchard L."/>
            <person name="Reinert K."/>
            <person name="Remington K.A."/>
            <person name="Clark A.G."/>
            <person name="Waterman M.S."/>
            <person name="Eichler E.E."/>
            <person name="Adams M.D."/>
            <person name="Hunkapiller M.W."/>
            <person name="Myers E.W."/>
            <person name="Venter J.C."/>
        </authorList>
    </citation>
    <scope>NUCLEOTIDE SEQUENCE [LARGE SCALE GENOMIC DNA]</scope>
</reference>
<reference key="7">
    <citation type="journal article" date="2004" name="Genome Res.">
        <title>The status, quality, and expansion of the NIH full-length cDNA project: the Mammalian Gene Collection (MGC).</title>
        <authorList>
            <consortium name="The MGC Project Team"/>
        </authorList>
    </citation>
    <scope>NUCLEOTIDE SEQUENCE [LARGE SCALE MRNA] (ISOFORM 4)</scope>
    <source>
        <tissue>Duodenum</tissue>
        <tissue>Lung</tissue>
    </source>
</reference>
<reference key="8">
    <citation type="journal article" date="2000" name="Gene">
        <title>Cloning of three novel neuronal Cdk5 activator binding proteins.</title>
        <authorList>
            <person name="Ching Y.-P."/>
            <person name="Qi Z."/>
            <person name="Wang J.H."/>
        </authorList>
    </citation>
    <scope>TISSUE SPECIFICITY</scope>
</reference>
<reference key="9">
    <citation type="journal article" date="2002" name="J. Biol. Chem.">
        <title>Identification of a neuronal Cdk5 activator-binding protein as Cdk5 inhibitor.</title>
        <authorList>
            <person name="Ching Y.-P."/>
            <person name="Pang A.S.H."/>
            <person name="Lam W.-H."/>
            <person name="Qi R.Z."/>
            <person name="Wang J.H."/>
        </authorList>
    </citation>
    <scope>FUNCTION</scope>
    <scope>INTERACTION WITH CDK5 AND CDK5R1</scope>
    <scope>TISSUE SPECIFICITY</scope>
</reference>
<reference key="10">
    <citation type="journal article" date="2012" name="Nucleic Acids Res.">
        <title>The CDK5 repressor CDK5RAP1 is a methylthiotransferase acting on nuclear and mitochondrial RNA.</title>
        <authorList>
            <person name="Reiter V."/>
            <person name="Matschkal D.M."/>
            <person name="Wagner M."/>
            <person name="Globisch D."/>
            <person name="Kneuttinger A.C."/>
            <person name="Mueller M."/>
            <person name="Carell T."/>
        </authorList>
    </citation>
    <scope>FUNCTION</scope>
    <scope>SUBCELLULAR LOCATION</scope>
    <scope>CATALYTIC ACTIVITY</scope>
</reference>
<reference key="11">
    <citation type="journal article" date="2015" name="Cell Metab.">
        <title>Cdk5rap1-mediated 2-methylthio modification of mitochondrial tRNAs governs protein translation and contributes to myopathy in mice and humans.</title>
        <authorList>
            <person name="Wei F.Y."/>
            <person name="Zhou B."/>
            <person name="Suzuki T."/>
            <person name="Miyata K."/>
            <person name="Ujihara Y."/>
            <person name="Horiguchi H."/>
            <person name="Takahashi N."/>
            <person name="Xie P."/>
            <person name="Michiue H."/>
            <person name="Fujimura A."/>
            <person name="Kaitsuka T."/>
            <person name="Matsui H."/>
            <person name="Koga Y."/>
            <person name="Mohri S."/>
            <person name="Suzuki T."/>
            <person name="Oike Y."/>
            <person name="Tomizawa K."/>
        </authorList>
    </citation>
    <scope>FUNCTION</scope>
    <scope>CATALYTIC ACTIVITY</scope>
    <scope>MUTAGENESIS OF CYS-258; CYS-262 AND CYS-265</scope>
</reference>
<reference key="12">
    <citation type="journal article" date="2017" name="Nucleic Acids Res.">
        <title>Cdk5rap1-mediated 2-methylthio-N6-isopentenyladenosine modification is absent from nuclear-derived RNA species.</title>
        <authorList>
            <person name="Fakruddin M."/>
            <person name="Wei F.Y."/>
            <person name="Emura S."/>
            <person name="Matsuda S."/>
            <person name="Yasukawa T."/>
            <person name="Kang D."/>
            <person name="Tomizawa K."/>
        </authorList>
    </citation>
    <scope>FUNCTION</scope>
</reference>
<dbReference type="EC" id="2.8.4.3" evidence="8 9"/>
<dbReference type="EMBL" id="AF152097">
    <property type="protein sequence ID" value="AAD34147.1"/>
    <property type="status" value="ALT_FRAME"/>
    <property type="molecule type" value="mRNA"/>
</dbReference>
<dbReference type="EMBL" id="AF161516">
    <property type="protein sequence ID" value="AAF29131.1"/>
    <property type="status" value="ALT_FRAME"/>
    <property type="molecule type" value="mRNA"/>
</dbReference>
<dbReference type="EMBL" id="AY462283">
    <property type="protein sequence ID" value="AAS18317.1"/>
    <property type="molecule type" value="mRNA"/>
</dbReference>
<dbReference type="EMBL" id="AY462284">
    <property type="protein sequence ID" value="AAS18318.1"/>
    <property type="molecule type" value="mRNA"/>
</dbReference>
<dbReference type="EMBL" id="AK023992">
    <property type="protein sequence ID" value="BAB14760.1"/>
    <property type="molecule type" value="mRNA"/>
</dbReference>
<dbReference type="EMBL" id="AK027449">
    <property type="protein sequence ID" value="BAB55120.1"/>
    <property type="status" value="ALT_SEQ"/>
    <property type="molecule type" value="mRNA"/>
</dbReference>
<dbReference type="EMBL" id="AK292075">
    <property type="protein sequence ID" value="BAF84764.1"/>
    <property type="molecule type" value="mRNA"/>
</dbReference>
<dbReference type="EMBL" id="AL355392">
    <property type="status" value="NOT_ANNOTATED_CDS"/>
    <property type="molecule type" value="Genomic_DNA"/>
</dbReference>
<dbReference type="EMBL" id="CH471077">
    <property type="protein sequence ID" value="EAW76319.1"/>
    <property type="molecule type" value="Genomic_DNA"/>
</dbReference>
<dbReference type="EMBL" id="CH471077">
    <property type="protein sequence ID" value="EAW76322.1"/>
    <property type="molecule type" value="Genomic_DNA"/>
</dbReference>
<dbReference type="EMBL" id="CH471077">
    <property type="protein sequence ID" value="EAW76323.1"/>
    <property type="molecule type" value="Genomic_DNA"/>
</dbReference>
<dbReference type="EMBL" id="BC001215">
    <property type="protein sequence ID" value="AAH01215.1"/>
    <property type="molecule type" value="mRNA"/>
</dbReference>
<dbReference type="EMBL" id="BC050706">
    <property type="protein sequence ID" value="AAH50706.1"/>
    <property type="molecule type" value="mRNA"/>
</dbReference>
<dbReference type="CCDS" id="CCDS13219.1">
    <molecule id="Q96SZ6-3"/>
</dbReference>
<dbReference type="CCDS" id="CCDS63255.1">
    <molecule id="Q96SZ6-4"/>
</dbReference>
<dbReference type="CCDS" id="CCDS93031.1">
    <molecule id="Q96SZ6-1"/>
</dbReference>
<dbReference type="RefSeq" id="NP_001265097.1">
    <molecule id="Q96SZ6-4"/>
    <property type="nucleotide sequence ID" value="NM_001278168.2"/>
</dbReference>
<dbReference type="RefSeq" id="NP_001265098.1">
    <property type="nucleotide sequence ID" value="NM_001278169.1"/>
</dbReference>
<dbReference type="RefSeq" id="NP_001352657.1">
    <molecule id="Q96SZ6-1"/>
    <property type="nucleotide sequence ID" value="NM_001365728.1"/>
</dbReference>
<dbReference type="RefSeq" id="NP_057166.4">
    <property type="nucleotide sequence ID" value="NM_016082.4"/>
</dbReference>
<dbReference type="RefSeq" id="NP_057492.2">
    <molecule id="Q96SZ6-3"/>
    <property type="nucleotide sequence ID" value="NM_016408.3"/>
</dbReference>
<dbReference type="SMR" id="Q96SZ6"/>
<dbReference type="BioGRID" id="119661">
    <property type="interactions" value="154"/>
</dbReference>
<dbReference type="FunCoup" id="Q96SZ6">
    <property type="interactions" value="2037"/>
</dbReference>
<dbReference type="IntAct" id="Q96SZ6">
    <property type="interactions" value="60"/>
</dbReference>
<dbReference type="MINT" id="Q96SZ6"/>
<dbReference type="STRING" id="9606.ENSP00000217372"/>
<dbReference type="iPTMnet" id="Q96SZ6"/>
<dbReference type="PhosphoSitePlus" id="Q96SZ6"/>
<dbReference type="SwissPalm" id="Q96SZ6"/>
<dbReference type="BioMuta" id="CDK5RAP1"/>
<dbReference type="DMDM" id="32129446"/>
<dbReference type="jPOST" id="Q96SZ6"/>
<dbReference type="MassIVE" id="Q96SZ6"/>
<dbReference type="PaxDb" id="9606-ENSP00000217372"/>
<dbReference type="PeptideAtlas" id="Q96SZ6"/>
<dbReference type="ProteomicsDB" id="65981"/>
<dbReference type="ProteomicsDB" id="78165">
    <molecule id="Q96SZ6-1"/>
</dbReference>
<dbReference type="ProteomicsDB" id="78166">
    <molecule id="Q96SZ6-2"/>
</dbReference>
<dbReference type="ProteomicsDB" id="78167">
    <molecule id="Q96SZ6-3"/>
</dbReference>
<dbReference type="ProteomicsDB" id="78168">
    <molecule id="Q96SZ6-4"/>
</dbReference>
<dbReference type="Pumba" id="Q96SZ6"/>
<dbReference type="Antibodypedia" id="43007">
    <property type="antibodies" value="180 antibodies from 27 providers"/>
</dbReference>
<dbReference type="DNASU" id="51654"/>
<dbReference type="Ensembl" id="ENST00000339269.5">
    <molecule id="Q96SZ6-4"/>
    <property type="protein sequence ID" value="ENSP00000341840.5"/>
    <property type="gene ID" value="ENSG00000101391.21"/>
</dbReference>
<dbReference type="Ensembl" id="ENST00000346416.7">
    <molecule id="Q96SZ6-3"/>
    <property type="protein sequence ID" value="ENSP00000217372.2"/>
    <property type="gene ID" value="ENSG00000101391.21"/>
</dbReference>
<dbReference type="Ensembl" id="ENST00000357886.8">
    <molecule id="Q96SZ6-1"/>
    <property type="protein sequence ID" value="ENSP00000350558.4"/>
    <property type="gene ID" value="ENSG00000101391.21"/>
</dbReference>
<dbReference type="Ensembl" id="ENST00000473997.5">
    <molecule id="Q96SZ6-2"/>
    <property type="protein sequence ID" value="ENSP00000476857.1"/>
    <property type="gene ID" value="ENSG00000101391.21"/>
</dbReference>
<dbReference type="GeneID" id="51654"/>
<dbReference type="KEGG" id="hsa:51654"/>
<dbReference type="MANE-Select" id="ENST00000346416.7">
    <molecule id="Q96SZ6-3"/>
    <property type="protein sequence ID" value="ENSP00000217372.2"/>
    <property type="RefSeq nucleotide sequence ID" value="NM_016408.4"/>
    <property type="RefSeq protein sequence ID" value="NP_057492.2"/>
</dbReference>
<dbReference type="UCSC" id="uc002wyz.5">
    <molecule id="Q96SZ6-1"/>
    <property type="organism name" value="human"/>
</dbReference>
<dbReference type="AGR" id="HGNC:15880"/>
<dbReference type="CTD" id="51654"/>
<dbReference type="DisGeNET" id="51654"/>
<dbReference type="GeneCards" id="CDK5RAP1"/>
<dbReference type="HGNC" id="HGNC:15880">
    <property type="gene designation" value="CDK5RAP1"/>
</dbReference>
<dbReference type="HPA" id="ENSG00000101391">
    <property type="expression patterns" value="Low tissue specificity"/>
</dbReference>
<dbReference type="MIM" id="608200">
    <property type="type" value="gene"/>
</dbReference>
<dbReference type="neXtProt" id="NX_Q96SZ6"/>
<dbReference type="OpenTargets" id="ENSG00000101391"/>
<dbReference type="PharmGKB" id="PA26313"/>
<dbReference type="VEuPathDB" id="HostDB:ENSG00000101391"/>
<dbReference type="eggNOG" id="KOG2492">
    <property type="taxonomic scope" value="Eukaryota"/>
</dbReference>
<dbReference type="GeneTree" id="ENSGT00940000160361"/>
<dbReference type="HOGENOM" id="CLU_018697_2_1_1"/>
<dbReference type="InParanoid" id="Q96SZ6"/>
<dbReference type="OMA" id="CEHFHIP"/>
<dbReference type="OrthoDB" id="190098at2759"/>
<dbReference type="PAN-GO" id="Q96SZ6">
    <property type="GO annotations" value="4 GO annotations based on evolutionary models"/>
</dbReference>
<dbReference type="PhylomeDB" id="Q96SZ6"/>
<dbReference type="TreeFam" id="TF101033"/>
<dbReference type="PathwayCommons" id="Q96SZ6"/>
<dbReference type="SignaLink" id="Q96SZ6"/>
<dbReference type="BioGRID-ORCS" id="51654">
    <property type="hits" value="12 hits in 1154 CRISPR screens"/>
</dbReference>
<dbReference type="ChiTaRS" id="CDK5RAP1">
    <property type="organism name" value="human"/>
</dbReference>
<dbReference type="GeneWiki" id="CDK5RAP1"/>
<dbReference type="GenomeRNAi" id="51654"/>
<dbReference type="Pharos" id="Q96SZ6">
    <property type="development level" value="Tbio"/>
</dbReference>
<dbReference type="PRO" id="PR:Q96SZ6"/>
<dbReference type="Proteomes" id="UP000005640">
    <property type="component" value="Chromosome 20"/>
</dbReference>
<dbReference type="RNAct" id="Q96SZ6">
    <property type="molecule type" value="protein"/>
</dbReference>
<dbReference type="Bgee" id="ENSG00000101391">
    <property type="expression patterns" value="Expressed in granulocyte and 205 other cell types or tissues"/>
</dbReference>
<dbReference type="ExpressionAtlas" id="Q96SZ6">
    <property type="expression patterns" value="baseline and differential"/>
</dbReference>
<dbReference type="GO" id="GO:0005829">
    <property type="term" value="C:cytosol"/>
    <property type="evidence" value="ECO:0000314"/>
    <property type="project" value="HPA"/>
</dbReference>
<dbReference type="GO" id="GO:0005759">
    <property type="term" value="C:mitochondrial matrix"/>
    <property type="evidence" value="ECO:0000314"/>
    <property type="project" value="FlyBase"/>
</dbReference>
<dbReference type="GO" id="GO:0005739">
    <property type="term" value="C:mitochondrion"/>
    <property type="evidence" value="ECO:0000314"/>
    <property type="project" value="HPA"/>
</dbReference>
<dbReference type="GO" id="GO:0005654">
    <property type="term" value="C:nucleoplasm"/>
    <property type="evidence" value="ECO:0000314"/>
    <property type="project" value="HPA"/>
</dbReference>
<dbReference type="GO" id="GO:0051539">
    <property type="term" value="F:4 iron, 4 sulfur cluster binding"/>
    <property type="evidence" value="ECO:0007669"/>
    <property type="project" value="UniProtKB-KW"/>
</dbReference>
<dbReference type="GO" id="GO:0046872">
    <property type="term" value="F:metal ion binding"/>
    <property type="evidence" value="ECO:0007669"/>
    <property type="project" value="UniProtKB-KW"/>
</dbReference>
<dbReference type="GO" id="GO:0035597">
    <property type="term" value="F:N6-isopentenyladenosine methylthiotransferase activity"/>
    <property type="evidence" value="ECO:0000315"/>
    <property type="project" value="FlyBase"/>
</dbReference>
<dbReference type="GO" id="GO:0019901">
    <property type="term" value="F:protein kinase binding"/>
    <property type="evidence" value="ECO:0000303"/>
    <property type="project" value="UniProtKB"/>
</dbReference>
<dbReference type="GO" id="GO:0007420">
    <property type="term" value="P:brain development"/>
    <property type="evidence" value="ECO:0000303"/>
    <property type="project" value="UniProtKB"/>
</dbReference>
<dbReference type="GO" id="GO:0070900">
    <property type="term" value="P:mitochondrial tRNA modification"/>
    <property type="evidence" value="ECO:0000318"/>
    <property type="project" value="GO_Central"/>
</dbReference>
<dbReference type="GO" id="GO:0045786">
    <property type="term" value="P:negative regulation of cell cycle"/>
    <property type="evidence" value="ECO:0000304"/>
    <property type="project" value="ARUK-UCL"/>
</dbReference>
<dbReference type="GO" id="GO:0045736">
    <property type="term" value="P:negative regulation of cyclin-dependent protein serine/threonine kinase activity"/>
    <property type="evidence" value="ECO:0000314"/>
    <property type="project" value="UniProtKB"/>
</dbReference>
<dbReference type="GO" id="GO:0070131">
    <property type="term" value="P:positive regulation of mitochondrial translation"/>
    <property type="evidence" value="ECO:0007669"/>
    <property type="project" value="Ensembl"/>
</dbReference>
<dbReference type="GO" id="GO:0045903">
    <property type="term" value="P:positive regulation of translational fidelity"/>
    <property type="evidence" value="ECO:0007669"/>
    <property type="project" value="Ensembl"/>
</dbReference>
<dbReference type="GO" id="GO:0045664">
    <property type="term" value="P:regulation of neuron differentiation"/>
    <property type="evidence" value="ECO:0000303"/>
    <property type="project" value="UniProtKB"/>
</dbReference>
<dbReference type="GO" id="GO:0009451">
    <property type="term" value="P:RNA modification"/>
    <property type="evidence" value="ECO:0000315"/>
    <property type="project" value="FlyBase"/>
</dbReference>
<dbReference type="FunFam" id="3.40.50.12160:FF:000003">
    <property type="entry name" value="CDK5 regulatory subunit-associated protein 1"/>
    <property type="match status" value="1"/>
</dbReference>
<dbReference type="FunFam" id="3.80.30.20:FF:000003">
    <property type="entry name" value="CDK5 regulatory subunit-associated protein 1"/>
    <property type="match status" value="1"/>
</dbReference>
<dbReference type="Gene3D" id="3.40.50.12160">
    <property type="entry name" value="Methylthiotransferase, N-terminal domain"/>
    <property type="match status" value="1"/>
</dbReference>
<dbReference type="Gene3D" id="3.80.30.20">
    <property type="entry name" value="tm_1862 like domain"/>
    <property type="match status" value="1"/>
</dbReference>
<dbReference type="HAMAP" id="MF_01864">
    <property type="entry name" value="tRNA_metthiotr_MiaB"/>
    <property type="match status" value="1"/>
</dbReference>
<dbReference type="InterPro" id="IPR006638">
    <property type="entry name" value="Elp3/MiaA/NifB-like_rSAM"/>
</dbReference>
<dbReference type="InterPro" id="IPR005839">
    <property type="entry name" value="Methylthiotransferase"/>
</dbReference>
<dbReference type="InterPro" id="IPR020612">
    <property type="entry name" value="Methylthiotransferase_CS"/>
</dbReference>
<dbReference type="InterPro" id="IPR013848">
    <property type="entry name" value="Methylthiotransferase_N"/>
</dbReference>
<dbReference type="InterPro" id="IPR038135">
    <property type="entry name" value="Methylthiotransferase_N_sf"/>
</dbReference>
<dbReference type="InterPro" id="IPR006463">
    <property type="entry name" value="MiaB_methiolase"/>
</dbReference>
<dbReference type="InterPro" id="IPR007197">
    <property type="entry name" value="rSAM"/>
</dbReference>
<dbReference type="InterPro" id="IPR023404">
    <property type="entry name" value="rSAM_horseshoe"/>
</dbReference>
<dbReference type="InterPro" id="IPR002792">
    <property type="entry name" value="TRAM_dom"/>
</dbReference>
<dbReference type="NCBIfam" id="TIGR01574">
    <property type="entry name" value="miaB-methiolase"/>
    <property type="match status" value="1"/>
</dbReference>
<dbReference type="NCBIfam" id="TIGR00089">
    <property type="entry name" value="MiaB/RimO family radical SAM methylthiotransferase"/>
    <property type="match status" value="1"/>
</dbReference>
<dbReference type="PANTHER" id="PTHR43020">
    <property type="entry name" value="CDK5 REGULATORY SUBUNIT-ASSOCIATED PROTEIN 1"/>
    <property type="match status" value="1"/>
</dbReference>
<dbReference type="PANTHER" id="PTHR43020:SF2">
    <property type="entry name" value="MITOCHONDRIAL TRNA METHYLTHIOTRANSFERASE CDK5RAP1"/>
    <property type="match status" value="1"/>
</dbReference>
<dbReference type="Pfam" id="PF04055">
    <property type="entry name" value="Radical_SAM"/>
    <property type="match status" value="1"/>
</dbReference>
<dbReference type="Pfam" id="PF01938">
    <property type="entry name" value="TRAM"/>
    <property type="match status" value="1"/>
</dbReference>
<dbReference type="Pfam" id="PF00919">
    <property type="entry name" value="UPF0004"/>
    <property type="match status" value="1"/>
</dbReference>
<dbReference type="SFLD" id="SFLDF00273">
    <property type="entry name" value="(dimethylallyl)adenosine_tRNA"/>
    <property type="match status" value="1"/>
</dbReference>
<dbReference type="SFLD" id="SFLDG01082">
    <property type="entry name" value="B12-binding_domain_containing"/>
    <property type="match status" value="1"/>
</dbReference>
<dbReference type="SFLD" id="SFLDF00413">
    <property type="entry name" value="CDK5RAP1"/>
    <property type="match status" value="1"/>
</dbReference>
<dbReference type="SFLD" id="SFLDS00029">
    <property type="entry name" value="Radical_SAM"/>
    <property type="match status" value="1"/>
</dbReference>
<dbReference type="SMART" id="SM00729">
    <property type="entry name" value="Elp3"/>
    <property type="match status" value="1"/>
</dbReference>
<dbReference type="SUPFAM" id="SSF102114">
    <property type="entry name" value="Radical SAM enzymes"/>
    <property type="match status" value="1"/>
</dbReference>
<dbReference type="PROSITE" id="PS51449">
    <property type="entry name" value="MTTASE_N"/>
    <property type="match status" value="1"/>
</dbReference>
<dbReference type="PROSITE" id="PS01278">
    <property type="entry name" value="MTTASE_RADICAL"/>
    <property type="match status" value="1"/>
</dbReference>
<dbReference type="PROSITE" id="PS51918">
    <property type="entry name" value="RADICAL_SAM"/>
    <property type="match status" value="1"/>
</dbReference>
<dbReference type="PROSITE" id="PS50926">
    <property type="entry name" value="TRAM"/>
    <property type="match status" value="1"/>
</dbReference>
<keyword id="KW-0004">4Fe-4S</keyword>
<keyword id="KW-0025">Alternative splicing</keyword>
<keyword id="KW-0408">Iron</keyword>
<keyword id="KW-0411">Iron-sulfur</keyword>
<keyword id="KW-0479">Metal-binding</keyword>
<keyword id="KW-0496">Mitochondrion</keyword>
<keyword id="KW-1267">Proteomics identification</keyword>
<keyword id="KW-1185">Reference proteome</keyword>
<keyword id="KW-0949">S-adenosyl-L-methionine</keyword>
<keyword id="KW-0808">Transferase</keyword>
<keyword id="KW-0809">Transit peptide</keyword>
<keyword id="KW-0819">tRNA processing</keyword>
<gene>
    <name evidence="20" type="primary">CDK5RAP1</name>
    <name type="synonym">C20orf34</name>
    <name type="ORF">CGI-05</name>
    <name type="ORF">HSPC167</name>
</gene>
<organism>
    <name type="scientific">Homo sapiens</name>
    <name type="common">Human</name>
    <dbReference type="NCBI Taxonomy" id="9606"/>
    <lineage>
        <taxon>Eukaryota</taxon>
        <taxon>Metazoa</taxon>
        <taxon>Chordata</taxon>
        <taxon>Craniata</taxon>
        <taxon>Vertebrata</taxon>
        <taxon>Euteleostomi</taxon>
        <taxon>Mammalia</taxon>
        <taxon>Eutheria</taxon>
        <taxon>Euarchontoglires</taxon>
        <taxon>Primates</taxon>
        <taxon>Haplorrhini</taxon>
        <taxon>Catarrhini</taxon>
        <taxon>Hominidae</taxon>
        <taxon>Homo</taxon>
    </lineage>
</organism>
<name>CK5P1_HUMAN</name>
<accession>Q96SZ6</accession>
<accession>A8K7R0</accession>
<accession>Q5QP46</accession>
<accession>Q5QP47</accession>
<accession>Q5QP48</accession>
<accession>Q675N4</accession>
<accession>Q675N5</accession>
<accession>Q9BVG6</accession>
<accession>Q9BWZ5</accession>
<accession>Q9H859</accession>
<accession>Q9NZZ9</accession>
<accession>Q9Y3F0</accession>
<sequence>MHPLQCVLQVQRSLGWGPLASVSWLSLRMCRAHSSLSSTMCPSPERQEDGARKDFSSRLAAGPTFQHFLKSASAPQEKLSSEVEDPPPYLMMDELLGRQRKVYLETYGCQMNVNDTEIAWSILQKSGYLRTSNLQEADVILLVTCSIREKAEQTIWNRLHQLKALKTRRPRSRVPLRIGILGCMAERLKEEILNREKMVDILAGPDAYRDLPRLLAVAESGQQAANVLLSLDETYADVMPVQTSASATSAFVSIMRGCDNMCSYCIVPFTRGRERSRPIASILEEVKKLSEQVFLPPRPPKVLGLQGLKEVTLLGQNVNSFRDNSEVQFNSAVPTNLSRGFTTNYKTKQGGLRFAHLLDQVSRVDPEMRIRFTSPHPKDFPDEVLQLIHERDNICKQIHLPAQSGSSRVLEAMRRGYSREAYVELVHHIRESIPGVSLSSDFIAGFCGETEEDHVQTVSLLREVQYNMGFLFAYSMRQKTRAYHRLKDDVPEEVKLRRLEELITIFREEATKANQTSVGCTQLVLVEGLSKRSATDLCGRNDGNLKVIFPDAEMEDVNNPGLRVRAQPGDYVLVKITSASSQTLRGHVLCRTTLRDSSAYC</sequence>
<protein>
    <recommendedName>
        <fullName evidence="15 16">Mitochondrial tRNA methylthiotransferase CDK5RAP1</fullName>
        <ecNumber evidence="8 9">2.8.4.3</ecNumber>
    </recommendedName>
    <alternativeName>
        <fullName>CDK5 activator-binding protein C42</fullName>
    </alternativeName>
    <alternativeName>
        <fullName>CDK5 regulatory subunit-associated protein 1</fullName>
    </alternativeName>
    <alternativeName>
        <fullName>mt-tRNA-2-methylthio-N6-dimethylallyladenosine synthase</fullName>
    </alternativeName>
    <alternativeName>
        <fullName>mt-tRNA-N6-(dimethylallyl)adenosine(37) methylthiotransferase</fullName>
    </alternativeName>
</protein>
<feature type="transit peptide" description="Mitochondrion" evidence="2">
    <location>
        <begin position="1"/>
        <end position="33"/>
    </location>
</feature>
<feature type="chain" id="PRO_0000141764" description="Mitochondrial tRNA methylthiotransferase CDK5RAP1" evidence="2">
    <location>
        <begin position="34"/>
        <end position="601"/>
    </location>
</feature>
<feature type="domain" description="MTTase N-terminal" evidence="4">
    <location>
        <begin position="100"/>
        <end position="220"/>
    </location>
</feature>
<feature type="domain" description="Radical SAM core" evidence="5">
    <location>
        <begin position="244"/>
        <end position="512"/>
    </location>
</feature>
<feature type="domain" description="TRAM" evidence="3">
    <location>
        <begin position="515"/>
        <end position="590"/>
    </location>
</feature>
<feature type="binding site" evidence="4">
    <location>
        <position position="109"/>
    </location>
    <ligand>
        <name>[4Fe-4S] cluster</name>
        <dbReference type="ChEBI" id="CHEBI:49883"/>
        <label>1</label>
    </ligand>
</feature>
<feature type="binding site" evidence="4">
    <location>
        <position position="145"/>
    </location>
    <ligand>
        <name>[4Fe-4S] cluster</name>
        <dbReference type="ChEBI" id="CHEBI:49883"/>
        <label>1</label>
    </ligand>
</feature>
<feature type="binding site" evidence="4">
    <location>
        <position position="183"/>
    </location>
    <ligand>
        <name>[4Fe-4S] cluster</name>
        <dbReference type="ChEBI" id="CHEBI:49883"/>
        <label>1</label>
    </ligand>
</feature>
<feature type="binding site" evidence="1">
    <location>
        <position position="258"/>
    </location>
    <ligand>
        <name>[4Fe-4S] cluster</name>
        <dbReference type="ChEBI" id="CHEBI:49883"/>
        <label>2</label>
        <note>4Fe-4S-S-AdoMet</note>
    </ligand>
</feature>
<feature type="binding site" evidence="1">
    <location>
        <position position="262"/>
    </location>
    <ligand>
        <name>[4Fe-4S] cluster</name>
        <dbReference type="ChEBI" id="CHEBI:49883"/>
        <label>2</label>
        <note>4Fe-4S-S-AdoMet</note>
    </ligand>
</feature>
<feature type="binding site" evidence="1">
    <location>
        <position position="265"/>
    </location>
    <ligand>
        <name>[4Fe-4S] cluster</name>
        <dbReference type="ChEBI" id="CHEBI:49883"/>
        <label>2</label>
        <note>4Fe-4S-S-AdoMet</note>
    </ligand>
</feature>
<feature type="splice variant" id="VSP_007560" description="In isoform 2." evidence="12">
    <location>
        <begin position="1"/>
        <end position="90"/>
    </location>
</feature>
<feature type="splice variant" id="VSP_047799" description="In isoform 5 and isoform 6." evidence="13">
    <location>
        <begin position="292"/>
        <end position="305"/>
    </location>
</feature>
<feature type="splice variant" id="VSP_007561" description="In isoform 4." evidence="14">
    <location>
        <begin position="293"/>
        <end position="383"/>
    </location>
</feature>
<feature type="splice variant" id="VSP_007562" description="In isoform 2 and isoform 3." evidence="11 12">
    <location>
        <begin position="293"/>
        <end position="306"/>
    </location>
</feature>
<feature type="splice variant" id="VSP_047800" description="In isoform 5." evidence="13">
    <original>GVSLSS</original>
    <variation>EDTGIS</variation>
    <location>
        <begin position="435"/>
        <end position="440"/>
    </location>
</feature>
<feature type="splice variant" id="VSP_047801" description="In isoform 5." evidence="13">
    <location>
        <begin position="441"/>
        <end position="601"/>
    </location>
</feature>
<feature type="splice variant" id="VSP_047802" description="In isoform 6." evidence="13">
    <original>ITSASSQTLRGHVLCRTTLRDSSAYC</original>
    <variation>VRSPFGLLACTVK</variation>
    <location>
        <begin position="576"/>
        <end position="601"/>
    </location>
</feature>
<feature type="mutagenesis site" description="Loss of mitochondrial tRNAs methylthiotransferase activity; when associated with A-262 and A-265." evidence="9">
    <original>C</original>
    <variation>A</variation>
    <location>
        <position position="258"/>
    </location>
</feature>
<feature type="mutagenesis site" description="Loss of mitochondrial tRNAs methylthiotransferase activity; when associated with A-258 and A-265." evidence="9">
    <original>C</original>
    <variation>A</variation>
    <location>
        <position position="262"/>
    </location>
</feature>
<feature type="mutagenesis site" description="Loss of mitochondrial tRNAs methylthiotransferase activity; when associated with A-258 and A-262." evidence="9">
    <original>C</original>
    <variation>A</variation>
    <location>
        <position position="265"/>
    </location>
</feature>
<feature type="sequence conflict" description="In Ref. 7; AAH01215." evidence="17" ref="7">
    <original>R</original>
    <variation>Q</variation>
    <location>
        <position position="213"/>
    </location>
</feature>
<feature type="sequence conflict" description="In Ref. 2." evidence="17" ref="2">
    <original>V</original>
    <variation>D</variation>
    <location>
        <position position="217"/>
    </location>
</feature>
<feature type="sequence conflict" description="In Ref. 4; BAB55120." evidence="17" ref="4">
    <original>F</original>
    <variation>L</variation>
    <location>
        <position position="269"/>
    </location>
</feature>
<feature type="sequence conflict" description="In Ref. 4; BAB55120." evidence="17" ref="4">
    <original>I</original>
    <variation>T</variation>
    <location>
        <position position="282"/>
    </location>
</feature>
<feature type="sequence conflict" description="In Ref. 4; BAB55120." evidence="17" ref="4">
    <original>D</original>
    <variation>G</variation>
    <location>
        <position position="323"/>
    </location>
</feature>
<feature type="sequence conflict" description="In Ref. 4; BAB14760." evidence="17" ref="4">
    <original>V</original>
    <variation>A</variation>
    <location>
        <position position="464"/>
    </location>
</feature>
<feature type="sequence conflict" description="In Ref. 2; AAF29131." evidence="17" ref="2">
    <original>T</original>
    <variation>S</variation>
    <location>
        <position position="511"/>
    </location>
</feature>
<feature type="sequence conflict" description="In Ref. 1." evidence="17" ref="1">
    <location>
        <position position="579"/>
    </location>
</feature>
<feature type="sequence conflict" description="In Ref. 4; BAB14760." evidence="17" ref="4">
    <original>R</original>
    <variation>K</variation>
    <location>
        <position position="585"/>
    </location>
</feature>
<evidence type="ECO:0000250" key="1">
    <source>
        <dbReference type="UniProtKB" id="Q9X2H6"/>
    </source>
</evidence>
<evidence type="ECO:0000255" key="2"/>
<evidence type="ECO:0000255" key="3">
    <source>
        <dbReference type="PROSITE-ProRule" id="PRU00208"/>
    </source>
</evidence>
<evidence type="ECO:0000255" key="4">
    <source>
        <dbReference type="PROSITE-ProRule" id="PRU00780"/>
    </source>
</evidence>
<evidence type="ECO:0000255" key="5">
    <source>
        <dbReference type="PROSITE-ProRule" id="PRU01266"/>
    </source>
</evidence>
<evidence type="ECO:0000269" key="6">
    <source>
    </source>
</evidence>
<evidence type="ECO:0000269" key="7">
    <source>
    </source>
</evidence>
<evidence type="ECO:0000269" key="8">
    <source>
    </source>
</evidence>
<evidence type="ECO:0000269" key="9">
    <source>
    </source>
</evidence>
<evidence type="ECO:0000269" key="10">
    <source>
    </source>
</evidence>
<evidence type="ECO:0000303" key="11">
    <source>
    </source>
</evidence>
<evidence type="ECO:0000303" key="12">
    <source>
    </source>
</evidence>
<evidence type="ECO:0000303" key="13">
    <source>
    </source>
</evidence>
<evidence type="ECO:0000303" key="14">
    <source>
    </source>
</evidence>
<evidence type="ECO:0000303" key="15">
    <source>
    </source>
</evidence>
<evidence type="ECO:0000303" key="16">
    <source>
    </source>
</evidence>
<evidence type="ECO:0000305" key="17"/>
<evidence type="ECO:0000305" key="18">
    <source>
    </source>
</evidence>
<evidence type="ECO:0000305" key="19">
    <source>
    </source>
</evidence>
<evidence type="ECO:0000312" key="20">
    <source>
        <dbReference type="HGNC" id="HGNC:15880"/>
    </source>
</evidence>